<comment type="function">
    <text evidence="1">Catalyzes a salvage reaction resulting in the formation of AMP, that is energically less costly than de novo synthesis.</text>
</comment>
<comment type="catalytic activity">
    <reaction evidence="1">
        <text>AMP + diphosphate = 5-phospho-alpha-D-ribose 1-diphosphate + adenine</text>
        <dbReference type="Rhea" id="RHEA:16609"/>
        <dbReference type="ChEBI" id="CHEBI:16708"/>
        <dbReference type="ChEBI" id="CHEBI:33019"/>
        <dbReference type="ChEBI" id="CHEBI:58017"/>
        <dbReference type="ChEBI" id="CHEBI:456215"/>
        <dbReference type="EC" id="2.4.2.7"/>
    </reaction>
</comment>
<comment type="pathway">
    <text evidence="1">Purine metabolism; AMP biosynthesis via salvage pathway; AMP from adenine: step 1/1.</text>
</comment>
<comment type="subunit">
    <text evidence="1">Homodimer.</text>
</comment>
<comment type="subcellular location">
    <subcellularLocation>
        <location evidence="1">Cytoplasm</location>
    </subcellularLocation>
</comment>
<comment type="similarity">
    <text evidence="1">Belongs to the purine/pyrimidine phosphoribosyltransferase family.</text>
</comment>
<keyword id="KW-0963">Cytoplasm</keyword>
<keyword id="KW-0328">Glycosyltransferase</keyword>
<keyword id="KW-0660">Purine salvage</keyword>
<keyword id="KW-1185">Reference proteome</keyword>
<keyword id="KW-0808">Transferase</keyword>
<dbReference type="EC" id="2.4.2.7" evidence="1"/>
<dbReference type="EMBL" id="CP000362">
    <property type="protein sequence ID" value="ABG31743.1"/>
    <property type="molecule type" value="Genomic_DNA"/>
</dbReference>
<dbReference type="RefSeq" id="WP_011568360.1">
    <property type="nucleotide sequence ID" value="NC_008209.1"/>
</dbReference>
<dbReference type="SMR" id="Q167V0"/>
<dbReference type="STRING" id="375451.RD1_2148"/>
<dbReference type="KEGG" id="rde:RD1_2148"/>
<dbReference type="eggNOG" id="COG0503">
    <property type="taxonomic scope" value="Bacteria"/>
</dbReference>
<dbReference type="HOGENOM" id="CLU_063339_3_0_5"/>
<dbReference type="OrthoDB" id="9803963at2"/>
<dbReference type="UniPathway" id="UPA00588">
    <property type="reaction ID" value="UER00646"/>
</dbReference>
<dbReference type="Proteomes" id="UP000007029">
    <property type="component" value="Chromosome"/>
</dbReference>
<dbReference type="GO" id="GO:0005737">
    <property type="term" value="C:cytoplasm"/>
    <property type="evidence" value="ECO:0007669"/>
    <property type="project" value="UniProtKB-SubCell"/>
</dbReference>
<dbReference type="GO" id="GO:0003999">
    <property type="term" value="F:adenine phosphoribosyltransferase activity"/>
    <property type="evidence" value="ECO:0007669"/>
    <property type="project" value="UniProtKB-UniRule"/>
</dbReference>
<dbReference type="GO" id="GO:0006168">
    <property type="term" value="P:adenine salvage"/>
    <property type="evidence" value="ECO:0007669"/>
    <property type="project" value="InterPro"/>
</dbReference>
<dbReference type="GO" id="GO:0044209">
    <property type="term" value="P:AMP salvage"/>
    <property type="evidence" value="ECO:0007669"/>
    <property type="project" value="UniProtKB-UniRule"/>
</dbReference>
<dbReference type="GO" id="GO:0006166">
    <property type="term" value="P:purine ribonucleoside salvage"/>
    <property type="evidence" value="ECO:0007669"/>
    <property type="project" value="UniProtKB-KW"/>
</dbReference>
<dbReference type="CDD" id="cd06223">
    <property type="entry name" value="PRTases_typeI"/>
    <property type="match status" value="1"/>
</dbReference>
<dbReference type="FunFam" id="3.40.50.2020:FF:000021">
    <property type="entry name" value="Adenine phosphoribosyltransferase"/>
    <property type="match status" value="1"/>
</dbReference>
<dbReference type="Gene3D" id="3.40.50.2020">
    <property type="match status" value="1"/>
</dbReference>
<dbReference type="HAMAP" id="MF_00004">
    <property type="entry name" value="Aden_phosphoribosyltr"/>
    <property type="match status" value="1"/>
</dbReference>
<dbReference type="InterPro" id="IPR005764">
    <property type="entry name" value="Ade_phspho_trans"/>
</dbReference>
<dbReference type="InterPro" id="IPR050120">
    <property type="entry name" value="Adenine_PRTase"/>
</dbReference>
<dbReference type="InterPro" id="IPR000836">
    <property type="entry name" value="PRibTrfase_dom"/>
</dbReference>
<dbReference type="InterPro" id="IPR029057">
    <property type="entry name" value="PRTase-like"/>
</dbReference>
<dbReference type="NCBIfam" id="TIGR01090">
    <property type="entry name" value="apt"/>
    <property type="match status" value="1"/>
</dbReference>
<dbReference type="NCBIfam" id="NF002634">
    <property type="entry name" value="PRK02304.1-3"/>
    <property type="match status" value="1"/>
</dbReference>
<dbReference type="NCBIfam" id="NF002636">
    <property type="entry name" value="PRK02304.1-5"/>
    <property type="match status" value="1"/>
</dbReference>
<dbReference type="PANTHER" id="PTHR11776">
    <property type="entry name" value="ADENINE PHOSPHORIBOSYLTRANSFERASE"/>
    <property type="match status" value="1"/>
</dbReference>
<dbReference type="PANTHER" id="PTHR11776:SF7">
    <property type="entry name" value="PHOSPHORIBOSYLTRANSFERASE DOMAIN-CONTAINING PROTEIN"/>
    <property type="match status" value="1"/>
</dbReference>
<dbReference type="Pfam" id="PF00156">
    <property type="entry name" value="Pribosyltran"/>
    <property type="match status" value="1"/>
</dbReference>
<dbReference type="SUPFAM" id="SSF53271">
    <property type="entry name" value="PRTase-like"/>
    <property type="match status" value="1"/>
</dbReference>
<dbReference type="PROSITE" id="PS00103">
    <property type="entry name" value="PUR_PYR_PR_TRANSFER"/>
    <property type="match status" value="1"/>
</dbReference>
<name>APT_ROSDO</name>
<organism>
    <name type="scientific">Roseobacter denitrificans (strain ATCC 33942 / OCh 114)</name>
    <name type="common">Erythrobacter sp. (strain OCh 114)</name>
    <name type="synonym">Roseobacter denitrificans</name>
    <dbReference type="NCBI Taxonomy" id="375451"/>
    <lineage>
        <taxon>Bacteria</taxon>
        <taxon>Pseudomonadati</taxon>
        <taxon>Pseudomonadota</taxon>
        <taxon>Alphaproteobacteria</taxon>
        <taxon>Rhodobacterales</taxon>
        <taxon>Roseobacteraceae</taxon>
        <taxon>Roseobacter</taxon>
    </lineage>
</organism>
<feature type="chain" id="PRO_0000321397" description="Adenine phosphoribosyltransferase">
    <location>
        <begin position="1"/>
        <end position="176"/>
    </location>
</feature>
<accession>Q167V0</accession>
<sequence>MKTVQDYIRTIVDFPHEGIMFRDVTTLFADPRGFRIAIDQMLHPYAGLQIDKVVGLEARGFILGGAIAHQLSKGFVPIRKKGKLPGKTISEAYTLEYGEAIVEIHDDAIQPGEKVLVVDDLLATGGTAEAGIKLIERLGGEIISTSFIIDLPDLGGRARLEAMGVEVNALCAYEGL</sequence>
<evidence type="ECO:0000255" key="1">
    <source>
        <dbReference type="HAMAP-Rule" id="MF_00004"/>
    </source>
</evidence>
<gene>
    <name evidence="1" type="primary">apt</name>
    <name type="ordered locus">RD1_2148</name>
</gene>
<proteinExistence type="inferred from homology"/>
<reference key="1">
    <citation type="journal article" date="2007" name="J. Bacteriol.">
        <title>The complete genome sequence of Roseobacter denitrificans reveals a mixotrophic rather than photosynthetic metabolism.</title>
        <authorList>
            <person name="Swingley W.D."/>
            <person name="Sadekar S."/>
            <person name="Mastrian S.D."/>
            <person name="Matthies H.J."/>
            <person name="Hao J."/>
            <person name="Ramos H."/>
            <person name="Acharya C.R."/>
            <person name="Conrad A.L."/>
            <person name="Taylor H.L."/>
            <person name="Dejesa L.C."/>
            <person name="Shah M.K."/>
            <person name="O'Huallachain M.E."/>
            <person name="Lince M.T."/>
            <person name="Blankenship R.E."/>
            <person name="Beatty J.T."/>
            <person name="Touchman J.W."/>
        </authorList>
    </citation>
    <scope>NUCLEOTIDE SEQUENCE [LARGE SCALE GENOMIC DNA]</scope>
    <source>
        <strain>ATCC 33942 / OCh 114</strain>
    </source>
</reference>
<protein>
    <recommendedName>
        <fullName evidence="1">Adenine phosphoribosyltransferase</fullName>
        <shortName evidence="1">APRT</shortName>
        <ecNumber evidence="1">2.4.2.7</ecNumber>
    </recommendedName>
</protein>